<organism>
    <name type="scientific">Yersinia pestis bv. Antiqua (strain Nepal516)</name>
    <dbReference type="NCBI Taxonomy" id="377628"/>
    <lineage>
        <taxon>Bacteria</taxon>
        <taxon>Pseudomonadati</taxon>
        <taxon>Pseudomonadota</taxon>
        <taxon>Gammaproteobacteria</taxon>
        <taxon>Enterobacterales</taxon>
        <taxon>Yersiniaceae</taxon>
        <taxon>Yersinia</taxon>
    </lineage>
</organism>
<comment type="function">
    <text evidence="1">Catalyzes the decarboxylation of four acetate groups of uroporphyrinogen-III to yield coproporphyrinogen-III.</text>
</comment>
<comment type="catalytic activity">
    <reaction evidence="1">
        <text>uroporphyrinogen III + 4 H(+) = coproporphyrinogen III + 4 CO2</text>
        <dbReference type="Rhea" id="RHEA:19865"/>
        <dbReference type="ChEBI" id="CHEBI:15378"/>
        <dbReference type="ChEBI" id="CHEBI:16526"/>
        <dbReference type="ChEBI" id="CHEBI:57308"/>
        <dbReference type="ChEBI" id="CHEBI:57309"/>
        <dbReference type="EC" id="4.1.1.37"/>
    </reaction>
</comment>
<comment type="pathway">
    <text evidence="1">Porphyrin-containing compound metabolism; protoporphyrin-IX biosynthesis; coproporphyrinogen-III from 5-aminolevulinate: step 4/4.</text>
</comment>
<comment type="subunit">
    <text evidence="1">Homodimer.</text>
</comment>
<comment type="subcellular location">
    <subcellularLocation>
        <location evidence="1">Cytoplasm</location>
    </subcellularLocation>
</comment>
<comment type="similarity">
    <text evidence="1">Belongs to the uroporphyrinogen decarboxylase family.</text>
</comment>
<gene>
    <name evidence="1" type="primary">hemE</name>
    <name type="ordered locus">YPN_0231</name>
    <name type="ORF">YP516_0209</name>
</gene>
<feature type="chain" id="PRO_1000024004" description="Uroporphyrinogen decarboxylase">
    <location>
        <begin position="1"/>
        <end position="355"/>
    </location>
</feature>
<feature type="binding site" evidence="1">
    <location>
        <begin position="27"/>
        <end position="31"/>
    </location>
    <ligand>
        <name>substrate</name>
    </ligand>
</feature>
<feature type="binding site" evidence="1">
    <location>
        <position position="77"/>
    </location>
    <ligand>
        <name>substrate</name>
    </ligand>
</feature>
<feature type="binding site" evidence="1">
    <location>
        <position position="154"/>
    </location>
    <ligand>
        <name>substrate</name>
    </ligand>
</feature>
<feature type="binding site" evidence="1">
    <location>
        <position position="209"/>
    </location>
    <ligand>
        <name>substrate</name>
    </ligand>
</feature>
<feature type="binding site" evidence="1">
    <location>
        <position position="327"/>
    </location>
    <ligand>
        <name>substrate</name>
    </ligand>
</feature>
<feature type="site" description="Transition state stabilizer" evidence="1">
    <location>
        <position position="77"/>
    </location>
</feature>
<dbReference type="EC" id="4.1.1.37" evidence="1"/>
<dbReference type="EMBL" id="CP000305">
    <property type="protein sequence ID" value="ABG16564.1"/>
    <property type="molecule type" value="Genomic_DNA"/>
</dbReference>
<dbReference type="EMBL" id="ACNQ01000004">
    <property type="protein sequence ID" value="EEO78482.1"/>
    <property type="molecule type" value="Genomic_DNA"/>
</dbReference>
<dbReference type="RefSeq" id="WP_002210686.1">
    <property type="nucleotide sequence ID" value="NZ_ACNQ01000004.1"/>
</dbReference>
<dbReference type="SMR" id="Q1CN66"/>
<dbReference type="GeneID" id="57974983"/>
<dbReference type="KEGG" id="ypn:YPN_0231"/>
<dbReference type="HOGENOM" id="CLU_040933_0_0_6"/>
<dbReference type="UniPathway" id="UPA00251">
    <property type="reaction ID" value="UER00321"/>
</dbReference>
<dbReference type="Proteomes" id="UP000008936">
    <property type="component" value="Chromosome"/>
</dbReference>
<dbReference type="GO" id="GO:0005829">
    <property type="term" value="C:cytosol"/>
    <property type="evidence" value="ECO:0007669"/>
    <property type="project" value="TreeGrafter"/>
</dbReference>
<dbReference type="GO" id="GO:0004853">
    <property type="term" value="F:uroporphyrinogen decarboxylase activity"/>
    <property type="evidence" value="ECO:0007669"/>
    <property type="project" value="UniProtKB-UniRule"/>
</dbReference>
<dbReference type="GO" id="GO:0019353">
    <property type="term" value="P:protoporphyrinogen IX biosynthetic process from glutamate"/>
    <property type="evidence" value="ECO:0007669"/>
    <property type="project" value="TreeGrafter"/>
</dbReference>
<dbReference type="CDD" id="cd00717">
    <property type="entry name" value="URO-D"/>
    <property type="match status" value="1"/>
</dbReference>
<dbReference type="FunFam" id="3.20.20.210:FF:000001">
    <property type="entry name" value="Uroporphyrinogen decarboxylase"/>
    <property type="match status" value="1"/>
</dbReference>
<dbReference type="Gene3D" id="3.20.20.210">
    <property type="match status" value="1"/>
</dbReference>
<dbReference type="HAMAP" id="MF_00218">
    <property type="entry name" value="URO_D"/>
    <property type="match status" value="1"/>
</dbReference>
<dbReference type="InterPro" id="IPR038071">
    <property type="entry name" value="UROD/MetE-like_sf"/>
</dbReference>
<dbReference type="InterPro" id="IPR006361">
    <property type="entry name" value="Uroporphyrinogen_deCO2ase_HemE"/>
</dbReference>
<dbReference type="InterPro" id="IPR000257">
    <property type="entry name" value="Uroporphyrinogen_deCOase"/>
</dbReference>
<dbReference type="NCBIfam" id="TIGR01464">
    <property type="entry name" value="hemE"/>
    <property type="match status" value="1"/>
</dbReference>
<dbReference type="PANTHER" id="PTHR21091">
    <property type="entry name" value="METHYLTETRAHYDROFOLATE:HOMOCYSTEINE METHYLTRANSFERASE RELATED"/>
    <property type="match status" value="1"/>
</dbReference>
<dbReference type="PANTHER" id="PTHR21091:SF169">
    <property type="entry name" value="UROPORPHYRINOGEN DECARBOXYLASE"/>
    <property type="match status" value="1"/>
</dbReference>
<dbReference type="Pfam" id="PF01208">
    <property type="entry name" value="URO-D"/>
    <property type="match status" value="1"/>
</dbReference>
<dbReference type="SUPFAM" id="SSF51726">
    <property type="entry name" value="UROD/MetE-like"/>
    <property type="match status" value="1"/>
</dbReference>
<dbReference type="PROSITE" id="PS00906">
    <property type="entry name" value="UROD_1"/>
    <property type="match status" value="1"/>
</dbReference>
<dbReference type="PROSITE" id="PS00907">
    <property type="entry name" value="UROD_2"/>
    <property type="match status" value="1"/>
</dbReference>
<reference key="1">
    <citation type="journal article" date="2006" name="J. Bacteriol.">
        <title>Complete genome sequence of Yersinia pestis strains Antiqua and Nepal516: evidence of gene reduction in an emerging pathogen.</title>
        <authorList>
            <person name="Chain P.S.G."/>
            <person name="Hu P."/>
            <person name="Malfatti S.A."/>
            <person name="Radnedge L."/>
            <person name="Larimer F."/>
            <person name="Vergez L.M."/>
            <person name="Worsham P."/>
            <person name="Chu M.C."/>
            <person name="Andersen G.L."/>
        </authorList>
    </citation>
    <scope>NUCLEOTIDE SEQUENCE [LARGE SCALE GENOMIC DNA]</scope>
    <source>
        <strain>Nepal516</strain>
    </source>
</reference>
<reference key="2">
    <citation type="submission" date="2009-04" db="EMBL/GenBank/DDBJ databases">
        <title>Yersinia pestis Nepal516A whole genome shotgun sequencing project.</title>
        <authorList>
            <person name="Plunkett G. III"/>
            <person name="Anderson B.D."/>
            <person name="Baumler D.J."/>
            <person name="Burland V."/>
            <person name="Cabot E.L."/>
            <person name="Glasner J.D."/>
            <person name="Mau B."/>
            <person name="Neeno-Eckwall E."/>
            <person name="Perna N.T."/>
            <person name="Munk A.C."/>
            <person name="Tapia R."/>
            <person name="Green L.D."/>
            <person name="Rogers Y.C."/>
            <person name="Detter J.C."/>
            <person name="Bruce D.C."/>
            <person name="Brettin T.S."/>
        </authorList>
    </citation>
    <scope>NUCLEOTIDE SEQUENCE [LARGE SCALE GENOMIC DNA]</scope>
    <source>
        <strain>Nepal516</strain>
    </source>
</reference>
<evidence type="ECO:0000255" key="1">
    <source>
        <dbReference type="HAMAP-Rule" id="MF_00218"/>
    </source>
</evidence>
<proteinExistence type="inferred from homology"/>
<protein>
    <recommendedName>
        <fullName evidence="1">Uroporphyrinogen decarboxylase</fullName>
        <shortName evidence="1">UPD</shortName>
        <shortName evidence="1">URO-D</shortName>
        <ecNumber evidence="1">4.1.1.37</ecNumber>
    </recommendedName>
</protein>
<sequence>MNELKNDRYLRALLRQPVDMTPVWMMRQAGRYLPEYKATRAIAGDFMSLCKNAELACEVTMQPLRRYPLDAAILFSDILTIPDAMGLGLYFETGEGPRFQSPITCRADVEKLPIPDPEQELGYVMNAVRTIRRELAGSVPLIGFSGSPWTLATYMVEGGSSKAFTKLKKMMYAEPQTLHLLLDKLADSVILYLNAQIKAGAQSVMIFDTWGGVLTGRDYHEFSLNYMHKIVDGLIRENEGRRVPVTLFTKGGGPWLEAMAATGCDALGLDWTTDIADARRRVGDKVALQGNMDPSVLYAPPARIEQEVSTILASFGQGEGHVFNLGHGIHQDVPPAHAGAFVNAVHALSRPYHQK</sequence>
<name>DCUP_YERPN</name>
<accession>Q1CN66</accession>
<accession>C4GNF8</accession>
<keyword id="KW-0963">Cytoplasm</keyword>
<keyword id="KW-0210">Decarboxylase</keyword>
<keyword id="KW-0456">Lyase</keyword>
<keyword id="KW-0627">Porphyrin biosynthesis</keyword>